<reference key="1">
    <citation type="journal article" date="2001" name="Proc. Natl. Acad. Sci. U.S.A.">
        <title>Complete genome sequence of an M1 strain of Streptococcus pyogenes.</title>
        <authorList>
            <person name="Ferretti J.J."/>
            <person name="McShan W.M."/>
            <person name="Ajdic D.J."/>
            <person name="Savic D.J."/>
            <person name="Savic G."/>
            <person name="Lyon K."/>
            <person name="Primeaux C."/>
            <person name="Sezate S."/>
            <person name="Suvorov A.N."/>
            <person name="Kenton S."/>
            <person name="Lai H.S."/>
            <person name="Lin S.P."/>
            <person name="Qian Y."/>
            <person name="Jia H.G."/>
            <person name="Najar F.Z."/>
            <person name="Ren Q."/>
            <person name="Zhu H."/>
            <person name="Song L."/>
            <person name="White J."/>
            <person name="Yuan X."/>
            <person name="Clifton S.W."/>
            <person name="Roe B.A."/>
            <person name="McLaughlin R.E."/>
        </authorList>
    </citation>
    <scope>NUCLEOTIDE SEQUENCE [LARGE SCALE GENOMIC DNA]</scope>
    <source>
        <strain>ATCC 700294 / SF370 / Serotype M1</strain>
    </source>
</reference>
<reference key="2">
    <citation type="journal article" date="2005" name="J. Infect. Dis.">
        <title>Evolutionary origin and emergence of a highly successful clone of serotype M1 group A Streptococcus involved multiple horizontal gene transfer events.</title>
        <authorList>
            <person name="Sumby P."/>
            <person name="Porcella S.F."/>
            <person name="Madrigal A.G."/>
            <person name="Barbian K.D."/>
            <person name="Virtaneva K."/>
            <person name="Ricklefs S.M."/>
            <person name="Sturdevant D.E."/>
            <person name="Graham M.R."/>
            <person name="Vuopio-Varkila J."/>
            <person name="Hoe N.P."/>
            <person name="Musser J.M."/>
        </authorList>
    </citation>
    <scope>NUCLEOTIDE SEQUENCE [LARGE SCALE GENOMIC DNA]</scope>
    <source>
        <strain>ATCC BAA-947 / MGAS5005 / Serotype M1</strain>
    </source>
</reference>
<sequence>MIPVVIEQTSRGERSYDIYSRLLKDRIIMLTGPVEDNMANSVIAQLLFLDAQDNTKDIYLYVNTPGGSVSAGLAIVDTMNFIKADVQTIVMGMAASMGTVIASSGTKGKRFMLPNAEYMIHQPMGGTGGGTQQTDMAIAAEHLLKTRHRLEKILAQNAGKTIKQIHKDAERDYWMSAEETLAYGFIDEIMENNELK</sequence>
<proteinExistence type="inferred from homology"/>
<accession>P69884</accession>
<accession>P82554</accession>
<accession>Q490M1</accession>
<accession>Q9A192</accession>
<evidence type="ECO:0000255" key="1">
    <source>
        <dbReference type="HAMAP-Rule" id="MF_00444"/>
    </source>
</evidence>
<organism>
    <name type="scientific">Streptococcus pyogenes serotype M1</name>
    <dbReference type="NCBI Taxonomy" id="301447"/>
    <lineage>
        <taxon>Bacteria</taxon>
        <taxon>Bacillati</taxon>
        <taxon>Bacillota</taxon>
        <taxon>Bacilli</taxon>
        <taxon>Lactobacillales</taxon>
        <taxon>Streptococcaceae</taxon>
        <taxon>Streptococcus</taxon>
    </lineage>
</organism>
<name>CLPP_STRP1</name>
<gene>
    <name evidence="1" type="primary">clpP</name>
    <name type="ordered locus">SPy_0395</name>
    <name type="ordered locus">M5005_Spy0328</name>
</gene>
<protein>
    <recommendedName>
        <fullName evidence="1">ATP-dependent Clp protease proteolytic subunit</fullName>
        <ecNumber evidence="1">3.4.21.92</ecNumber>
    </recommendedName>
    <alternativeName>
        <fullName evidence="1">Endopeptidase Clp</fullName>
    </alternativeName>
</protein>
<dbReference type="EC" id="3.4.21.92" evidence="1"/>
<dbReference type="EMBL" id="AE004092">
    <property type="protein sequence ID" value="AAK33432.1"/>
    <property type="molecule type" value="Genomic_DNA"/>
</dbReference>
<dbReference type="EMBL" id="CP000017">
    <property type="protein sequence ID" value="AAZ50947.1"/>
    <property type="molecule type" value="Genomic_DNA"/>
</dbReference>
<dbReference type="RefSeq" id="NP_268711.1">
    <property type="nucleotide sequence ID" value="NC_002737.2"/>
</dbReference>
<dbReference type="SMR" id="P69884"/>
<dbReference type="MEROPS" id="S14.001"/>
<dbReference type="PaxDb" id="1314-HKU360_00366"/>
<dbReference type="KEGG" id="spy:SPy_0395"/>
<dbReference type="KEGG" id="spz:M5005_Spy0328"/>
<dbReference type="PATRIC" id="fig|160490.10.peg.339"/>
<dbReference type="HOGENOM" id="CLU_058707_3_2_9"/>
<dbReference type="OMA" id="RDYWMKA"/>
<dbReference type="Proteomes" id="UP000000750">
    <property type="component" value="Chromosome"/>
</dbReference>
<dbReference type="GO" id="GO:0005737">
    <property type="term" value="C:cytoplasm"/>
    <property type="evidence" value="ECO:0007669"/>
    <property type="project" value="UniProtKB-SubCell"/>
</dbReference>
<dbReference type="GO" id="GO:0009368">
    <property type="term" value="C:endopeptidase Clp complex"/>
    <property type="evidence" value="ECO:0007669"/>
    <property type="project" value="TreeGrafter"/>
</dbReference>
<dbReference type="GO" id="GO:0004176">
    <property type="term" value="F:ATP-dependent peptidase activity"/>
    <property type="evidence" value="ECO:0007669"/>
    <property type="project" value="InterPro"/>
</dbReference>
<dbReference type="GO" id="GO:0051117">
    <property type="term" value="F:ATPase binding"/>
    <property type="evidence" value="ECO:0007669"/>
    <property type="project" value="TreeGrafter"/>
</dbReference>
<dbReference type="GO" id="GO:0004252">
    <property type="term" value="F:serine-type endopeptidase activity"/>
    <property type="evidence" value="ECO:0007669"/>
    <property type="project" value="UniProtKB-UniRule"/>
</dbReference>
<dbReference type="GO" id="GO:0006515">
    <property type="term" value="P:protein quality control for misfolded or incompletely synthesized proteins"/>
    <property type="evidence" value="ECO:0007669"/>
    <property type="project" value="TreeGrafter"/>
</dbReference>
<dbReference type="CDD" id="cd07017">
    <property type="entry name" value="S14_ClpP_2"/>
    <property type="match status" value="1"/>
</dbReference>
<dbReference type="FunFam" id="3.90.226.10:FF:000014">
    <property type="entry name" value="ATP-dependent Clp protease proteolytic subunit"/>
    <property type="match status" value="1"/>
</dbReference>
<dbReference type="Gene3D" id="3.90.226.10">
    <property type="entry name" value="2-enoyl-CoA Hydratase, Chain A, domain 1"/>
    <property type="match status" value="1"/>
</dbReference>
<dbReference type="HAMAP" id="MF_00444">
    <property type="entry name" value="ClpP"/>
    <property type="match status" value="1"/>
</dbReference>
<dbReference type="InterPro" id="IPR001907">
    <property type="entry name" value="ClpP"/>
</dbReference>
<dbReference type="InterPro" id="IPR029045">
    <property type="entry name" value="ClpP/crotonase-like_dom_sf"/>
</dbReference>
<dbReference type="InterPro" id="IPR023562">
    <property type="entry name" value="ClpP/TepA"/>
</dbReference>
<dbReference type="InterPro" id="IPR033135">
    <property type="entry name" value="ClpP_His_AS"/>
</dbReference>
<dbReference type="InterPro" id="IPR018215">
    <property type="entry name" value="ClpP_Ser_AS"/>
</dbReference>
<dbReference type="NCBIfam" id="NF001368">
    <property type="entry name" value="PRK00277.1"/>
    <property type="match status" value="1"/>
</dbReference>
<dbReference type="NCBIfam" id="NF009205">
    <property type="entry name" value="PRK12553.1"/>
    <property type="match status" value="1"/>
</dbReference>
<dbReference type="PANTHER" id="PTHR10381">
    <property type="entry name" value="ATP-DEPENDENT CLP PROTEASE PROTEOLYTIC SUBUNIT"/>
    <property type="match status" value="1"/>
</dbReference>
<dbReference type="PANTHER" id="PTHR10381:SF70">
    <property type="entry name" value="ATP-DEPENDENT CLP PROTEASE PROTEOLYTIC SUBUNIT"/>
    <property type="match status" value="1"/>
</dbReference>
<dbReference type="Pfam" id="PF00574">
    <property type="entry name" value="CLP_protease"/>
    <property type="match status" value="1"/>
</dbReference>
<dbReference type="PRINTS" id="PR00127">
    <property type="entry name" value="CLPPROTEASEP"/>
</dbReference>
<dbReference type="SUPFAM" id="SSF52096">
    <property type="entry name" value="ClpP/crotonase"/>
    <property type="match status" value="1"/>
</dbReference>
<dbReference type="PROSITE" id="PS00382">
    <property type="entry name" value="CLP_PROTEASE_HIS"/>
    <property type="match status" value="1"/>
</dbReference>
<dbReference type="PROSITE" id="PS00381">
    <property type="entry name" value="CLP_PROTEASE_SER"/>
    <property type="match status" value="1"/>
</dbReference>
<comment type="function">
    <text evidence="1">Cleaves peptides in various proteins in a process that requires ATP hydrolysis. Has a chymotrypsin-like activity. Plays a major role in the degradation of misfolded proteins.</text>
</comment>
<comment type="catalytic activity">
    <reaction evidence="1">
        <text>Hydrolysis of proteins to small peptides in the presence of ATP and magnesium. alpha-casein is the usual test substrate. In the absence of ATP, only oligopeptides shorter than five residues are hydrolyzed (such as succinyl-Leu-Tyr-|-NHMec, and Leu-Tyr-Leu-|-Tyr-Trp, in which cleavage of the -Tyr-|-Leu- and -Tyr-|-Trp bonds also occurs).</text>
        <dbReference type="EC" id="3.4.21.92"/>
    </reaction>
</comment>
<comment type="subunit">
    <text evidence="1">Fourteen ClpP subunits assemble into 2 heptameric rings which stack back to back to give a disk-like structure with a central cavity, resembling the structure of eukaryotic proteasomes.</text>
</comment>
<comment type="subcellular location">
    <subcellularLocation>
        <location evidence="1">Cytoplasm</location>
    </subcellularLocation>
</comment>
<comment type="similarity">
    <text evidence="1">Belongs to the peptidase S14 family.</text>
</comment>
<feature type="chain" id="PRO_0000179672" description="ATP-dependent Clp protease proteolytic subunit">
    <location>
        <begin position="1"/>
        <end position="196"/>
    </location>
</feature>
<feature type="active site" description="Nucleophile" evidence="1">
    <location>
        <position position="96"/>
    </location>
</feature>
<feature type="active site" evidence="1">
    <location>
        <position position="121"/>
    </location>
</feature>
<keyword id="KW-0963">Cytoplasm</keyword>
<keyword id="KW-0378">Hydrolase</keyword>
<keyword id="KW-0645">Protease</keyword>
<keyword id="KW-1185">Reference proteome</keyword>
<keyword id="KW-0720">Serine protease</keyword>